<name>HIS1_IGNH4</name>
<keyword id="KW-0028">Amino-acid biosynthesis</keyword>
<keyword id="KW-0067">ATP-binding</keyword>
<keyword id="KW-0963">Cytoplasm</keyword>
<keyword id="KW-0328">Glycosyltransferase</keyword>
<keyword id="KW-0368">Histidine biosynthesis</keyword>
<keyword id="KW-0460">Magnesium</keyword>
<keyword id="KW-0479">Metal-binding</keyword>
<keyword id="KW-0547">Nucleotide-binding</keyword>
<keyword id="KW-1185">Reference proteome</keyword>
<keyword id="KW-0808">Transferase</keyword>
<dbReference type="EC" id="2.4.2.17" evidence="1"/>
<dbReference type="EMBL" id="CP000816">
    <property type="protein sequence ID" value="ABU81936.1"/>
    <property type="molecule type" value="Genomic_DNA"/>
</dbReference>
<dbReference type="RefSeq" id="WP_012122900.1">
    <property type="nucleotide sequence ID" value="NC_009776.1"/>
</dbReference>
<dbReference type="SMR" id="A8AAI4"/>
<dbReference type="STRING" id="453591.Igni_0754"/>
<dbReference type="GeneID" id="5561871"/>
<dbReference type="KEGG" id="iho:Igni_0754"/>
<dbReference type="eggNOG" id="arCOG02208">
    <property type="taxonomic scope" value="Archaea"/>
</dbReference>
<dbReference type="HOGENOM" id="CLU_038115_1_1_2"/>
<dbReference type="OrthoDB" id="33116at2157"/>
<dbReference type="PhylomeDB" id="A8AAI4"/>
<dbReference type="UniPathway" id="UPA00031">
    <property type="reaction ID" value="UER00006"/>
</dbReference>
<dbReference type="Proteomes" id="UP000000262">
    <property type="component" value="Chromosome"/>
</dbReference>
<dbReference type="GO" id="GO:0005737">
    <property type="term" value="C:cytoplasm"/>
    <property type="evidence" value="ECO:0007669"/>
    <property type="project" value="UniProtKB-SubCell"/>
</dbReference>
<dbReference type="GO" id="GO:0005524">
    <property type="term" value="F:ATP binding"/>
    <property type="evidence" value="ECO:0007669"/>
    <property type="project" value="UniProtKB-KW"/>
</dbReference>
<dbReference type="GO" id="GO:0003879">
    <property type="term" value="F:ATP phosphoribosyltransferase activity"/>
    <property type="evidence" value="ECO:0007669"/>
    <property type="project" value="UniProtKB-UniRule"/>
</dbReference>
<dbReference type="GO" id="GO:0000287">
    <property type="term" value="F:magnesium ion binding"/>
    <property type="evidence" value="ECO:0007669"/>
    <property type="project" value="UniProtKB-UniRule"/>
</dbReference>
<dbReference type="GO" id="GO:0000105">
    <property type="term" value="P:L-histidine biosynthetic process"/>
    <property type="evidence" value="ECO:0007669"/>
    <property type="project" value="UniProtKB-UniRule"/>
</dbReference>
<dbReference type="CDD" id="cd13594">
    <property type="entry name" value="PBP2_HisGL4"/>
    <property type="match status" value="1"/>
</dbReference>
<dbReference type="FunFam" id="3.30.70.120:FF:000002">
    <property type="entry name" value="ATP phosphoribosyltransferase"/>
    <property type="match status" value="1"/>
</dbReference>
<dbReference type="Gene3D" id="3.30.70.120">
    <property type="match status" value="1"/>
</dbReference>
<dbReference type="Gene3D" id="3.40.190.10">
    <property type="entry name" value="Periplasmic binding protein-like II"/>
    <property type="match status" value="2"/>
</dbReference>
<dbReference type="HAMAP" id="MF_00079">
    <property type="entry name" value="HisG_Long"/>
    <property type="match status" value="1"/>
</dbReference>
<dbReference type="InterPro" id="IPR020621">
    <property type="entry name" value="ATP-PRT_HisG_long"/>
</dbReference>
<dbReference type="InterPro" id="IPR013820">
    <property type="entry name" value="ATP_PRibTrfase_cat"/>
</dbReference>
<dbReference type="InterPro" id="IPR018198">
    <property type="entry name" value="ATP_PRibTrfase_CS"/>
</dbReference>
<dbReference type="InterPro" id="IPR001348">
    <property type="entry name" value="ATP_PRibTrfase_HisG"/>
</dbReference>
<dbReference type="InterPro" id="IPR013115">
    <property type="entry name" value="HisG_C"/>
</dbReference>
<dbReference type="InterPro" id="IPR011322">
    <property type="entry name" value="N-reg_PII-like_a/b"/>
</dbReference>
<dbReference type="InterPro" id="IPR015867">
    <property type="entry name" value="N-reg_PII/ATP_PRibTrfase_C"/>
</dbReference>
<dbReference type="NCBIfam" id="TIGR00070">
    <property type="entry name" value="hisG"/>
    <property type="match status" value="1"/>
</dbReference>
<dbReference type="NCBIfam" id="TIGR03455">
    <property type="entry name" value="HisG_C-term"/>
    <property type="match status" value="1"/>
</dbReference>
<dbReference type="PANTHER" id="PTHR21403:SF10">
    <property type="entry name" value="ATP PHOSPHORIBOSYLTRANSFERASE"/>
    <property type="match status" value="1"/>
</dbReference>
<dbReference type="PANTHER" id="PTHR21403">
    <property type="entry name" value="ATP PHOSPHORIBOSYLTRANSFERASE ATP-PRTASE"/>
    <property type="match status" value="1"/>
</dbReference>
<dbReference type="Pfam" id="PF01634">
    <property type="entry name" value="HisG"/>
    <property type="match status" value="1"/>
</dbReference>
<dbReference type="Pfam" id="PF08029">
    <property type="entry name" value="HisG_C"/>
    <property type="match status" value="1"/>
</dbReference>
<dbReference type="SUPFAM" id="SSF54913">
    <property type="entry name" value="GlnB-like"/>
    <property type="match status" value="1"/>
</dbReference>
<dbReference type="SUPFAM" id="SSF53850">
    <property type="entry name" value="Periplasmic binding protein-like II"/>
    <property type="match status" value="1"/>
</dbReference>
<dbReference type="PROSITE" id="PS01316">
    <property type="entry name" value="ATP_P_PHORIBOSYLTR"/>
    <property type="match status" value="1"/>
</dbReference>
<protein>
    <recommendedName>
        <fullName evidence="1">ATP phosphoribosyltransferase</fullName>
        <shortName evidence="1">ATP-PRT</shortName>
        <shortName evidence="1">ATP-PRTase</shortName>
        <ecNumber evidence="1">2.4.2.17</ecNumber>
    </recommendedName>
</protein>
<organism>
    <name type="scientific">Ignicoccus hospitalis (strain KIN4/I / DSM 18386 / JCM 14125)</name>
    <dbReference type="NCBI Taxonomy" id="453591"/>
    <lineage>
        <taxon>Archaea</taxon>
        <taxon>Thermoproteota</taxon>
        <taxon>Thermoprotei</taxon>
        <taxon>Desulfurococcales</taxon>
        <taxon>Desulfurococcaceae</taxon>
        <taxon>Ignicoccus</taxon>
    </lineage>
</organism>
<gene>
    <name evidence="1" type="primary">hisG</name>
    <name type="ordered locus">Igni_0754</name>
</gene>
<sequence>MRFVIPSKGRLKDATLELLERAGIRPSYLDSRALIVPSNKPNLDLVFARPEDIPWIVESGAAEVGITGHDYVLESGRDVAEILDLNYGRSKLVLAVPRDSGIKRPEELPKGFRIATKFINIATDYFEKKGLDVKIVKVSGSAEVMPGIGAADGIIDVMSTGTTLKLHGLTPIDVILSSSARLIVRKDLLDDPRVETIKLMLESVLRASKKKLVMMNVPDEALDDVLKVLPAMSGPTISKVKSEKPMWEVIAAVDEDEIADIIVKLKNAGAKDILVLNVERLIP</sequence>
<accession>A8AAI4</accession>
<comment type="function">
    <text evidence="1">Catalyzes the condensation of ATP and 5-phosphoribose 1-diphosphate to form N'-(5'-phosphoribosyl)-ATP (PR-ATP). Has a crucial role in the pathway because the rate of histidine biosynthesis seems to be controlled primarily by regulation of HisG enzymatic activity.</text>
</comment>
<comment type="catalytic activity">
    <reaction evidence="1">
        <text>1-(5-phospho-beta-D-ribosyl)-ATP + diphosphate = 5-phospho-alpha-D-ribose 1-diphosphate + ATP</text>
        <dbReference type="Rhea" id="RHEA:18473"/>
        <dbReference type="ChEBI" id="CHEBI:30616"/>
        <dbReference type="ChEBI" id="CHEBI:33019"/>
        <dbReference type="ChEBI" id="CHEBI:58017"/>
        <dbReference type="ChEBI" id="CHEBI:73183"/>
        <dbReference type="EC" id="2.4.2.17"/>
    </reaction>
</comment>
<comment type="cofactor">
    <cofactor evidence="1">
        <name>Mg(2+)</name>
        <dbReference type="ChEBI" id="CHEBI:18420"/>
    </cofactor>
</comment>
<comment type="activity regulation">
    <text evidence="1">Feedback inhibited by histidine.</text>
</comment>
<comment type="pathway">
    <text evidence="1">Amino-acid biosynthesis; L-histidine biosynthesis; L-histidine from 5-phospho-alpha-D-ribose 1-diphosphate: step 1/9.</text>
</comment>
<comment type="subcellular location">
    <subcellularLocation>
        <location evidence="1">Cytoplasm</location>
    </subcellularLocation>
</comment>
<comment type="similarity">
    <text evidence="1">Belongs to the ATP phosphoribosyltransferase family. Long subfamily.</text>
</comment>
<feature type="chain" id="PRO_1000004466" description="ATP phosphoribosyltransferase">
    <location>
        <begin position="1"/>
        <end position="283"/>
    </location>
</feature>
<reference key="1">
    <citation type="journal article" date="2008" name="Genome Biol.">
        <title>A genomic analysis of the archaeal system Ignicoccus hospitalis-Nanoarchaeum equitans.</title>
        <authorList>
            <person name="Podar M."/>
            <person name="Anderson I."/>
            <person name="Makarova K.S."/>
            <person name="Elkins J.G."/>
            <person name="Ivanova N."/>
            <person name="Wall M.A."/>
            <person name="Lykidis A."/>
            <person name="Mavromatis K."/>
            <person name="Sun H."/>
            <person name="Hudson M.E."/>
            <person name="Chen W."/>
            <person name="Deciu C."/>
            <person name="Hutchison D."/>
            <person name="Eads J.R."/>
            <person name="Anderson A."/>
            <person name="Fernandes F."/>
            <person name="Szeto E."/>
            <person name="Lapidus A."/>
            <person name="Kyrpides N.C."/>
            <person name="Saier M.H. Jr."/>
            <person name="Richardson P.M."/>
            <person name="Rachel R."/>
            <person name="Huber H."/>
            <person name="Eisen J.A."/>
            <person name="Koonin E.V."/>
            <person name="Keller M."/>
            <person name="Stetter K.O."/>
        </authorList>
    </citation>
    <scope>NUCLEOTIDE SEQUENCE [LARGE SCALE GENOMIC DNA]</scope>
    <source>
        <strain>KIN4/I / DSM 18386 / JCM 14125</strain>
    </source>
</reference>
<proteinExistence type="inferred from homology"/>
<evidence type="ECO:0000255" key="1">
    <source>
        <dbReference type="HAMAP-Rule" id="MF_00079"/>
    </source>
</evidence>